<sequence length="175" mass="20852">MTSSAMDNNEPKVLEMVYDATILPEGSSMDPNIMDCINRHINMCIQRTYSSSIIAILDRFLMMNKDELNNTQCHIIKEFMTYEQMAIDHYGGYVNAILYQIRKRPNQHHTIDLFKRIKRTRYDTFKVDPVEFVKKVIGFVSILNKYKPVYSYVLYENVLYDEFKCFINYVETKYF</sequence>
<evidence type="ECO:0000269" key="1">
    <source>
    </source>
</evidence>
<evidence type="ECO:0000269" key="2">
    <source>
    </source>
</evidence>
<evidence type="ECO:0000269" key="3">
    <source>
    </source>
</evidence>
<evidence type="ECO:0000305" key="4"/>
<dbReference type="EMBL" id="M20779">
    <property type="protein sequence ID" value="AAA69612.1"/>
    <property type="molecule type" value="Genomic_DNA"/>
</dbReference>
<dbReference type="EMBL" id="M22812">
    <property type="protein sequence ID" value="AAA69609.1"/>
    <property type="molecule type" value="Genomic_DNA"/>
</dbReference>
<dbReference type="EMBL" id="AY243312">
    <property type="protein sequence ID" value="AAO89308.1"/>
    <property type="molecule type" value="Genomic_DNA"/>
</dbReference>
<dbReference type="PIR" id="A94377">
    <property type="entry name" value="FOVZN2"/>
</dbReference>
<dbReference type="RefSeq" id="YP_232911.1">
    <property type="nucleotide sequence ID" value="NC_006998.1"/>
</dbReference>
<dbReference type="DNASU" id="3707644"/>
<dbReference type="GeneID" id="3707644"/>
<dbReference type="KEGG" id="vg:3707644"/>
<dbReference type="Proteomes" id="UP000000344">
    <property type="component" value="Genome"/>
</dbReference>
<dbReference type="GO" id="GO:0042025">
    <property type="term" value="C:host cell nucleus"/>
    <property type="evidence" value="ECO:0000314"/>
    <property type="project" value="UniProtKB"/>
</dbReference>
<dbReference type="GO" id="GO:0039548">
    <property type="term" value="P:symbiont-mediated suppression of host cytoplasmic pattern recognition receptor signaling pathway via inhibition of IRF3 activity"/>
    <property type="evidence" value="ECO:0000314"/>
    <property type="project" value="UniProtKB"/>
</dbReference>
<dbReference type="InterPro" id="IPR022819">
    <property type="entry name" value="Poxvirus_Bcl-2-like"/>
</dbReference>
<dbReference type="Pfam" id="PF06227">
    <property type="entry name" value="Poxv_Bcl-2-like"/>
    <property type="match status" value="1"/>
</dbReference>
<proteinExistence type="evidence at transcript level"/>
<feature type="chain" id="PRO_0000099636" description="Protein OPG036">
    <location>
        <begin position="1"/>
        <end position="175"/>
    </location>
</feature>
<reference key="1">
    <citation type="journal article" date="1988" name="Virology">
        <title>Nucleotide sequence and molecular genetic analysis of the vaccinia virus HindIII N/M region encoding the genes responsible for resistance to alpha-amanitin.</title>
        <authorList>
            <person name="Tamin A."/>
            <person name="Villarreal E.C."/>
            <person name="Weinrich S.L."/>
            <person name="Hruby D.E."/>
        </authorList>
    </citation>
    <scope>NUCLEOTIDE SEQUENCE [GENOMIC DNA]</scope>
</reference>
<reference key="2">
    <citation type="journal article" date="1988" name="Virology">
        <title>Analysis of a large cluster of nonessential genes deleted from a vaccinia virus terminal transposition mutant.</title>
        <authorList>
            <person name="Kotwal G.J."/>
            <person name="Moss B."/>
        </authorList>
    </citation>
    <scope>NUCLEOTIDE SEQUENCE [GENOMIC DNA] OF 1-22 (TRANSPOSITION MUTANT 6/2)</scope>
</reference>
<reference key="3">
    <citation type="submission" date="2003-02" db="EMBL/GenBank/DDBJ databases">
        <title>Sequencing of the coding region of Vaccinia-WR to an average 9-fold redundancy and an error rate of 0.16/10kb.</title>
        <authorList>
            <person name="Esposito J.J."/>
            <person name="Frace A.M."/>
            <person name="Sammons S.A."/>
            <person name="Olsen-Rasmussen M."/>
            <person name="Osborne J."/>
            <person name="Wohlhueter R."/>
        </authorList>
    </citation>
    <scope>NUCLEOTIDE SEQUENCE [LARGE SCALE GENOMIC DNA]</scope>
</reference>
<reference key="4">
    <citation type="journal article" date="2010" name="Virol. J.">
        <title>A poxvirus Bcl-2-like gene family involved in regulation of host immune response: sequence similarity and evolutionary history.</title>
        <authorList>
            <person name="Gonzalez J.M."/>
            <person name="Esteban M."/>
        </authorList>
    </citation>
    <scope>FUNCTION</scope>
</reference>
<reference key="5">
    <citation type="journal article" date="2013" name="J. Gen. Virol.">
        <title>Vaccinia virus protein N2 is a nuclear IRF3 inhibitor that promotes virulence.</title>
        <authorList>
            <person name="Ferguson B.J."/>
            <person name="Benfield C.T."/>
            <person name="Ren H."/>
            <person name="Lee V.H."/>
            <person name="Frazer G.L."/>
            <person name="Strnadova P."/>
            <person name="Sumner R.P."/>
            <person name="Smith G.L."/>
        </authorList>
    </citation>
    <scope>SUBCELLULAR LOCATION</scope>
    <scope>FUNCTION</scope>
</reference>
<reference key="6">
    <citation type="journal article" date="2015" name="J. Virol.">
        <title>Deciphering poxvirus gene expression by RNA sequencing and ribosome profiling.</title>
        <authorList>
            <person name="Yang Z."/>
            <person name="Cao S."/>
            <person name="Martens C.A."/>
            <person name="Porcella S.F."/>
            <person name="Xie Z."/>
            <person name="Ma M."/>
            <person name="Shen B."/>
            <person name="Moss B."/>
        </authorList>
    </citation>
    <scope>INDUCTION</scope>
</reference>
<organismHost>
    <name type="scientific">Bos taurus</name>
    <name type="common">Bovine</name>
    <dbReference type="NCBI Taxonomy" id="9913"/>
</organismHost>
<keyword id="KW-0244">Early protein</keyword>
<keyword id="KW-1048">Host nucleus</keyword>
<keyword id="KW-0945">Host-virus interaction</keyword>
<keyword id="KW-1090">Inhibition of host innate immune response by virus</keyword>
<keyword id="KW-1092">Inhibition of host IRF3 by virus</keyword>
<keyword id="KW-1113">Inhibition of host RLR pathway by virus</keyword>
<keyword id="KW-1185">Reference proteome</keyword>
<keyword id="KW-0899">Viral immunoevasion</keyword>
<protein>
    <recommendedName>
        <fullName>Protein OPG036</fullName>
    </recommendedName>
    <alternativeName>
        <fullName>Protein N2</fullName>
    </alternativeName>
</protein>
<comment type="function">
    <text evidence="1 2">Plays a role in the inhibition of host innate immune response. Within the host nucleus, inhibits activation of interferon-beta promoter by inhibiting IRF3 activation.</text>
</comment>
<comment type="subcellular location">
    <subcellularLocation>
        <location evidence="2">Host nucleus</location>
    </subcellularLocation>
</comment>
<comment type="induction">
    <text evidence="3">Expressed in the early phase of the viral replicative cycle.</text>
</comment>
<comment type="similarity">
    <text evidence="4">Belongs to the poxviridae OPG036 family.</text>
</comment>
<name>PG036_VACCW</name>
<gene>
    <name type="primary">OPG036</name>
    <name type="synonym">N2L</name>
    <name type="ORF">VACWR029</name>
</gene>
<organism>
    <name type="scientific">Vaccinia virus (strain Western Reserve)</name>
    <name type="common">VACV</name>
    <name type="synonym">Vaccinia virus (strain WR)</name>
    <dbReference type="NCBI Taxonomy" id="10254"/>
    <lineage>
        <taxon>Viruses</taxon>
        <taxon>Varidnaviria</taxon>
        <taxon>Bamfordvirae</taxon>
        <taxon>Nucleocytoviricota</taxon>
        <taxon>Pokkesviricetes</taxon>
        <taxon>Chitovirales</taxon>
        <taxon>Poxviridae</taxon>
        <taxon>Chordopoxvirinae</taxon>
        <taxon>Orthopoxvirus</taxon>
        <taxon>Vaccinia virus</taxon>
    </lineage>
</organism>
<accession>P14357</accession>
<accession>Q76ZY0</accession>